<protein>
    <recommendedName>
        <fullName evidence="1">Aspartate--tRNA(Asp/Asn) ligase</fullName>
        <ecNumber evidence="1">6.1.1.23</ecNumber>
    </recommendedName>
    <alternativeName>
        <fullName evidence="1">Aspartyl-tRNA synthetase</fullName>
        <shortName evidence="1">AspRS</shortName>
    </alternativeName>
    <alternativeName>
        <fullName evidence="1">Non-discriminating aspartyl-tRNA synthetase</fullName>
        <shortName evidence="1">ND-AspRS</shortName>
    </alternativeName>
</protein>
<gene>
    <name evidence="1" type="primary">aspS</name>
    <name type="ordered locus">RBE_0349</name>
</gene>
<name>SYDND_RICBR</name>
<proteinExistence type="inferred from homology"/>
<reference key="1">
    <citation type="journal article" date="2006" name="PLoS Genet.">
        <title>Genome sequence of Rickettsia bellii illuminates the role of amoebae in gene exchanges between intracellular pathogens.</title>
        <authorList>
            <person name="Ogata H."/>
            <person name="La Scola B."/>
            <person name="Audic S."/>
            <person name="Renesto P."/>
            <person name="Blanc G."/>
            <person name="Robert C."/>
            <person name="Fournier P.-E."/>
            <person name="Claverie J.-M."/>
            <person name="Raoult D."/>
        </authorList>
    </citation>
    <scope>NUCLEOTIDE SEQUENCE [LARGE SCALE GENOMIC DNA]</scope>
    <source>
        <strain>RML369-C</strain>
    </source>
</reference>
<organism>
    <name type="scientific">Rickettsia bellii (strain RML369-C)</name>
    <dbReference type="NCBI Taxonomy" id="336407"/>
    <lineage>
        <taxon>Bacteria</taxon>
        <taxon>Pseudomonadati</taxon>
        <taxon>Pseudomonadota</taxon>
        <taxon>Alphaproteobacteria</taxon>
        <taxon>Rickettsiales</taxon>
        <taxon>Rickettsiaceae</taxon>
        <taxon>Rickettsieae</taxon>
        <taxon>Rickettsia</taxon>
        <taxon>belli group</taxon>
    </lineage>
</organism>
<accession>Q1RJN4</accession>
<sequence length="602" mass="68048">MHKYRTHNCNELKISDVGAEVKLSGWVHRRRDHGNLVFVDLRDHYGITQIVFTDQNPQLMDDASRLRYESVVTVIGKVVARSEETINNTLPTGHIEVLAGEFIVESAADTLPFVINTEKDAPEDSRLKHRFLDLRREKLHNNIMLRSQIISYIRQLMTARGFTEFQTPILTASSPEGARDFLVPSRLHPGKFYALPQAPQQFKQLLMVSGFDRYFQIAPCFRDEDARADRSPGEFYQLDIEMSFVTQEDIFSTIEPVMYELFTKFTDKKVSEAPFIRIPYNESMLKYGSDKPDLRNPIVIADVTEIFRDSDFTIFRENIKKGSIVRAIPAPYAAAQPRSFFDKMIEFAISEGAGGLGYIQFSETGEAKGPVAKFLSTQQLEDLKATANISNGDAVFFASDKKDKAAKLAGKVRIKLADELDLLEKDCFKFCWITDFPFYELNEETGKIDFSHNPFSMPQGGLEALENAKTTEELLELTAYQYDIVCNGIELSSGAVRNHKPEIMYKAFAIAGYSEEEVDKRFGGMIRAFKFGAPPHGGIAPGIDRIVMLLAEATNIREIIAFPLNQQAEDLLMNAPNYVEDKALKELNVMLSPSARKNAEKE</sequence>
<keyword id="KW-0030">Aminoacyl-tRNA synthetase</keyword>
<keyword id="KW-0067">ATP-binding</keyword>
<keyword id="KW-0963">Cytoplasm</keyword>
<keyword id="KW-0436">Ligase</keyword>
<keyword id="KW-0547">Nucleotide-binding</keyword>
<keyword id="KW-0648">Protein biosynthesis</keyword>
<feature type="chain" id="PRO_0000278063" description="Aspartate--tRNA(Asp/Asn) ligase">
    <location>
        <begin position="1"/>
        <end position="602"/>
    </location>
</feature>
<feature type="region of interest" description="Aspartate" evidence="1">
    <location>
        <begin position="200"/>
        <end position="203"/>
    </location>
</feature>
<feature type="binding site" evidence="1">
    <location>
        <position position="176"/>
    </location>
    <ligand>
        <name>L-aspartate</name>
        <dbReference type="ChEBI" id="CHEBI:29991"/>
    </ligand>
</feature>
<feature type="binding site" evidence="1">
    <location>
        <begin position="222"/>
        <end position="224"/>
    </location>
    <ligand>
        <name>ATP</name>
        <dbReference type="ChEBI" id="CHEBI:30616"/>
    </ligand>
</feature>
<feature type="binding site" evidence="1">
    <location>
        <position position="222"/>
    </location>
    <ligand>
        <name>L-aspartate</name>
        <dbReference type="ChEBI" id="CHEBI:29991"/>
    </ligand>
</feature>
<feature type="binding site" evidence="1">
    <location>
        <position position="452"/>
    </location>
    <ligand>
        <name>L-aspartate</name>
        <dbReference type="ChEBI" id="CHEBI:29991"/>
    </ligand>
</feature>
<feature type="binding site" evidence="1">
    <location>
        <position position="490"/>
    </location>
    <ligand>
        <name>ATP</name>
        <dbReference type="ChEBI" id="CHEBI:30616"/>
    </ligand>
</feature>
<feature type="binding site" evidence="1">
    <location>
        <position position="497"/>
    </location>
    <ligand>
        <name>L-aspartate</name>
        <dbReference type="ChEBI" id="CHEBI:29991"/>
    </ligand>
</feature>
<feature type="binding site" evidence="1">
    <location>
        <begin position="542"/>
        <end position="545"/>
    </location>
    <ligand>
        <name>ATP</name>
        <dbReference type="ChEBI" id="CHEBI:30616"/>
    </ligand>
</feature>
<feature type="site" description="Important for tRNA non-discrimination" evidence="1">
    <location>
        <position position="33"/>
    </location>
</feature>
<evidence type="ECO:0000255" key="1">
    <source>
        <dbReference type="HAMAP-Rule" id="MF_00044"/>
    </source>
</evidence>
<dbReference type="EC" id="6.1.1.23" evidence="1"/>
<dbReference type="EMBL" id="CP000087">
    <property type="protein sequence ID" value="ABE04430.1"/>
    <property type="molecule type" value="Genomic_DNA"/>
</dbReference>
<dbReference type="RefSeq" id="WP_011477039.1">
    <property type="nucleotide sequence ID" value="NC_007940.1"/>
</dbReference>
<dbReference type="SMR" id="Q1RJN4"/>
<dbReference type="KEGG" id="rbe:RBE_0349"/>
<dbReference type="eggNOG" id="COG0173">
    <property type="taxonomic scope" value="Bacteria"/>
</dbReference>
<dbReference type="HOGENOM" id="CLU_014330_3_2_5"/>
<dbReference type="OrthoDB" id="9802326at2"/>
<dbReference type="Proteomes" id="UP000001951">
    <property type="component" value="Chromosome"/>
</dbReference>
<dbReference type="GO" id="GO:0005737">
    <property type="term" value="C:cytoplasm"/>
    <property type="evidence" value="ECO:0007669"/>
    <property type="project" value="UniProtKB-SubCell"/>
</dbReference>
<dbReference type="GO" id="GO:0004815">
    <property type="term" value="F:aspartate-tRNA ligase activity"/>
    <property type="evidence" value="ECO:0007669"/>
    <property type="project" value="UniProtKB-UniRule"/>
</dbReference>
<dbReference type="GO" id="GO:0050560">
    <property type="term" value="F:aspartate-tRNA(Asn) ligase activity"/>
    <property type="evidence" value="ECO:0007669"/>
    <property type="project" value="UniProtKB-EC"/>
</dbReference>
<dbReference type="GO" id="GO:0005524">
    <property type="term" value="F:ATP binding"/>
    <property type="evidence" value="ECO:0007669"/>
    <property type="project" value="UniProtKB-UniRule"/>
</dbReference>
<dbReference type="GO" id="GO:0003676">
    <property type="term" value="F:nucleic acid binding"/>
    <property type="evidence" value="ECO:0007669"/>
    <property type="project" value="InterPro"/>
</dbReference>
<dbReference type="GO" id="GO:0006422">
    <property type="term" value="P:aspartyl-tRNA aminoacylation"/>
    <property type="evidence" value="ECO:0007669"/>
    <property type="project" value="UniProtKB-UniRule"/>
</dbReference>
<dbReference type="CDD" id="cd00777">
    <property type="entry name" value="AspRS_core"/>
    <property type="match status" value="1"/>
</dbReference>
<dbReference type="CDD" id="cd04317">
    <property type="entry name" value="EcAspRS_like_N"/>
    <property type="match status" value="1"/>
</dbReference>
<dbReference type="Gene3D" id="3.30.930.10">
    <property type="entry name" value="Bira Bifunctional Protein, Domain 2"/>
    <property type="match status" value="1"/>
</dbReference>
<dbReference type="Gene3D" id="3.30.1360.30">
    <property type="entry name" value="GAD-like domain"/>
    <property type="match status" value="1"/>
</dbReference>
<dbReference type="Gene3D" id="2.40.50.140">
    <property type="entry name" value="Nucleic acid-binding proteins"/>
    <property type="match status" value="1"/>
</dbReference>
<dbReference type="HAMAP" id="MF_00044">
    <property type="entry name" value="Asp_tRNA_synth_type1"/>
    <property type="match status" value="1"/>
</dbReference>
<dbReference type="InterPro" id="IPR004364">
    <property type="entry name" value="Aa-tRNA-synt_II"/>
</dbReference>
<dbReference type="InterPro" id="IPR006195">
    <property type="entry name" value="aa-tRNA-synth_II"/>
</dbReference>
<dbReference type="InterPro" id="IPR045864">
    <property type="entry name" value="aa-tRNA-synth_II/BPL/LPL"/>
</dbReference>
<dbReference type="InterPro" id="IPR004524">
    <property type="entry name" value="Asp-tRNA-ligase_1"/>
</dbReference>
<dbReference type="InterPro" id="IPR047089">
    <property type="entry name" value="Asp-tRNA-ligase_1_N"/>
</dbReference>
<dbReference type="InterPro" id="IPR002312">
    <property type="entry name" value="Asp/Asn-tRNA-synth_IIb"/>
</dbReference>
<dbReference type="InterPro" id="IPR047090">
    <property type="entry name" value="AspRS_core"/>
</dbReference>
<dbReference type="InterPro" id="IPR004115">
    <property type="entry name" value="GAD-like_sf"/>
</dbReference>
<dbReference type="InterPro" id="IPR029351">
    <property type="entry name" value="GAD_dom"/>
</dbReference>
<dbReference type="InterPro" id="IPR012340">
    <property type="entry name" value="NA-bd_OB-fold"/>
</dbReference>
<dbReference type="InterPro" id="IPR004365">
    <property type="entry name" value="NA-bd_OB_tRNA"/>
</dbReference>
<dbReference type="NCBIfam" id="TIGR00459">
    <property type="entry name" value="aspS_bact"/>
    <property type="match status" value="1"/>
</dbReference>
<dbReference type="NCBIfam" id="NF001750">
    <property type="entry name" value="PRK00476.1"/>
    <property type="match status" value="1"/>
</dbReference>
<dbReference type="PANTHER" id="PTHR22594:SF5">
    <property type="entry name" value="ASPARTATE--TRNA LIGASE, MITOCHONDRIAL"/>
    <property type="match status" value="1"/>
</dbReference>
<dbReference type="PANTHER" id="PTHR22594">
    <property type="entry name" value="ASPARTYL/LYSYL-TRNA SYNTHETASE"/>
    <property type="match status" value="1"/>
</dbReference>
<dbReference type="Pfam" id="PF02938">
    <property type="entry name" value="GAD"/>
    <property type="match status" value="1"/>
</dbReference>
<dbReference type="Pfam" id="PF00152">
    <property type="entry name" value="tRNA-synt_2"/>
    <property type="match status" value="1"/>
</dbReference>
<dbReference type="Pfam" id="PF01336">
    <property type="entry name" value="tRNA_anti-codon"/>
    <property type="match status" value="1"/>
</dbReference>
<dbReference type="PRINTS" id="PR01042">
    <property type="entry name" value="TRNASYNTHASP"/>
</dbReference>
<dbReference type="SUPFAM" id="SSF55681">
    <property type="entry name" value="Class II aaRS and biotin synthetases"/>
    <property type="match status" value="1"/>
</dbReference>
<dbReference type="SUPFAM" id="SSF55261">
    <property type="entry name" value="GAD domain-like"/>
    <property type="match status" value="1"/>
</dbReference>
<dbReference type="SUPFAM" id="SSF50249">
    <property type="entry name" value="Nucleic acid-binding proteins"/>
    <property type="match status" value="1"/>
</dbReference>
<dbReference type="PROSITE" id="PS50862">
    <property type="entry name" value="AA_TRNA_LIGASE_II"/>
    <property type="match status" value="1"/>
</dbReference>
<comment type="function">
    <text evidence="1">Aspartyl-tRNA synthetase with relaxed tRNA specificity since it is able to aspartylate not only its cognate tRNA(Asp) but also tRNA(Asn). Reaction proceeds in two steps: L-aspartate is first activated by ATP to form Asp-AMP and then transferred to the acceptor end of tRNA(Asp/Asn).</text>
</comment>
<comment type="catalytic activity">
    <reaction evidence="1">
        <text>tRNA(Asx) + L-aspartate + ATP = L-aspartyl-tRNA(Asx) + AMP + diphosphate</text>
        <dbReference type="Rhea" id="RHEA:18349"/>
        <dbReference type="Rhea" id="RHEA-COMP:9710"/>
        <dbReference type="Rhea" id="RHEA-COMP:9711"/>
        <dbReference type="ChEBI" id="CHEBI:29991"/>
        <dbReference type="ChEBI" id="CHEBI:30616"/>
        <dbReference type="ChEBI" id="CHEBI:33019"/>
        <dbReference type="ChEBI" id="CHEBI:78442"/>
        <dbReference type="ChEBI" id="CHEBI:78516"/>
        <dbReference type="ChEBI" id="CHEBI:456215"/>
        <dbReference type="EC" id="6.1.1.23"/>
    </reaction>
</comment>
<comment type="subunit">
    <text evidence="1">Homodimer.</text>
</comment>
<comment type="subcellular location">
    <subcellularLocation>
        <location evidence="1">Cytoplasm</location>
    </subcellularLocation>
</comment>
<comment type="similarity">
    <text evidence="1">Belongs to the class-II aminoacyl-tRNA synthetase family. Type 1 subfamily.</text>
</comment>